<evidence type="ECO:0000255" key="1">
    <source>
        <dbReference type="HAMAP-Rule" id="MF_01552"/>
    </source>
</evidence>
<evidence type="ECO:0000305" key="2"/>
<dbReference type="EC" id="6.3.2.-" evidence="1"/>
<dbReference type="EMBL" id="AE008923">
    <property type="protein sequence ID" value="AAM38096.1"/>
    <property type="status" value="ALT_FRAME"/>
    <property type="molecule type" value="Genomic_DNA"/>
</dbReference>
<dbReference type="EMBL" id="AE008923">
    <property type="protein sequence ID" value="AAM38097.1"/>
    <property type="status" value="ALT_FRAME"/>
    <property type="molecule type" value="Genomic_DNA"/>
</dbReference>
<dbReference type="SMR" id="Q8PHK1"/>
<dbReference type="KEGG" id="xac:XAC3252"/>
<dbReference type="KEGG" id="xac:XAC3253"/>
<dbReference type="eggNOG" id="COG0189">
    <property type="taxonomic scope" value="Bacteria"/>
</dbReference>
<dbReference type="HOGENOM" id="CLU_3086199_0_0_6"/>
<dbReference type="Proteomes" id="UP000000576">
    <property type="component" value="Chromosome"/>
</dbReference>
<dbReference type="GO" id="GO:0005737">
    <property type="term" value="C:cytoplasm"/>
    <property type="evidence" value="ECO:0007669"/>
    <property type="project" value="TreeGrafter"/>
</dbReference>
<dbReference type="GO" id="GO:0005524">
    <property type="term" value="F:ATP binding"/>
    <property type="evidence" value="ECO:0007669"/>
    <property type="project" value="UniProtKB-UniRule"/>
</dbReference>
<dbReference type="GO" id="GO:0046872">
    <property type="term" value="F:metal ion binding"/>
    <property type="evidence" value="ECO:0007669"/>
    <property type="project" value="UniProtKB-KW"/>
</dbReference>
<dbReference type="GO" id="GO:0018169">
    <property type="term" value="F:ribosomal S6-glutamic acid ligase activity"/>
    <property type="evidence" value="ECO:0007669"/>
    <property type="project" value="TreeGrafter"/>
</dbReference>
<dbReference type="GO" id="GO:0036211">
    <property type="term" value="P:protein modification process"/>
    <property type="evidence" value="ECO:0007669"/>
    <property type="project" value="InterPro"/>
</dbReference>
<dbReference type="GO" id="GO:0009432">
    <property type="term" value="P:SOS response"/>
    <property type="evidence" value="ECO:0007669"/>
    <property type="project" value="TreeGrafter"/>
</dbReference>
<dbReference type="GO" id="GO:0006412">
    <property type="term" value="P:translation"/>
    <property type="evidence" value="ECO:0007669"/>
    <property type="project" value="UniProtKB-KW"/>
</dbReference>
<dbReference type="FunFam" id="3.40.50.20:FF:000004">
    <property type="entry name" value="Probable alpha-L-glutamate ligase"/>
    <property type="match status" value="1"/>
</dbReference>
<dbReference type="FunFam" id="3.30.1490.20:FF:000005">
    <property type="entry name" value="Probable alpha-L-glutamate ligase 1"/>
    <property type="match status" value="1"/>
</dbReference>
<dbReference type="Gene3D" id="3.40.50.20">
    <property type="match status" value="1"/>
</dbReference>
<dbReference type="Gene3D" id="3.30.1490.20">
    <property type="entry name" value="ATP-grasp fold, A domain"/>
    <property type="match status" value="1"/>
</dbReference>
<dbReference type="Gene3D" id="3.30.470.20">
    <property type="entry name" value="ATP-grasp fold, B domain"/>
    <property type="match status" value="1"/>
</dbReference>
<dbReference type="HAMAP" id="MF_01552">
    <property type="entry name" value="RimK"/>
    <property type="match status" value="1"/>
</dbReference>
<dbReference type="InterPro" id="IPR011761">
    <property type="entry name" value="ATP-grasp"/>
</dbReference>
<dbReference type="InterPro" id="IPR013651">
    <property type="entry name" value="ATP-grasp_RimK-type"/>
</dbReference>
<dbReference type="InterPro" id="IPR013815">
    <property type="entry name" value="ATP_grasp_subdomain_1"/>
</dbReference>
<dbReference type="InterPro" id="IPR023533">
    <property type="entry name" value="RimK"/>
</dbReference>
<dbReference type="InterPro" id="IPR041107">
    <property type="entry name" value="Rimk_N"/>
</dbReference>
<dbReference type="InterPro" id="IPR004666">
    <property type="entry name" value="Rp_bS6_RimK/Lys_biosynth_LsyX"/>
</dbReference>
<dbReference type="NCBIfam" id="NF007764">
    <property type="entry name" value="PRK10446.1"/>
    <property type="match status" value="1"/>
</dbReference>
<dbReference type="NCBIfam" id="TIGR00768">
    <property type="entry name" value="rimK_fam"/>
    <property type="match status" value="1"/>
</dbReference>
<dbReference type="PANTHER" id="PTHR21621:SF7">
    <property type="entry name" value="RIBOSOMAL PROTEIN BS6--L-GLUTAMATE LIGASE"/>
    <property type="match status" value="1"/>
</dbReference>
<dbReference type="PANTHER" id="PTHR21621">
    <property type="entry name" value="RIBOSOMAL PROTEIN S6 MODIFICATION PROTEIN"/>
    <property type="match status" value="1"/>
</dbReference>
<dbReference type="Pfam" id="PF08443">
    <property type="entry name" value="RimK"/>
    <property type="match status" value="1"/>
</dbReference>
<dbReference type="Pfam" id="PF18030">
    <property type="entry name" value="Rimk_N"/>
    <property type="match status" value="1"/>
</dbReference>
<dbReference type="SUPFAM" id="SSF56059">
    <property type="entry name" value="Glutathione synthetase ATP-binding domain-like"/>
    <property type="match status" value="1"/>
</dbReference>
<dbReference type="PROSITE" id="PS50975">
    <property type="entry name" value="ATP_GRASP"/>
    <property type="match status" value="1"/>
</dbReference>
<gene>
    <name evidence="1" type="primary">rimK</name>
    <name type="ordered locus">XAC3252/XAC3253</name>
</gene>
<proteinExistence type="inferred from homology"/>
<reference key="1">
    <citation type="journal article" date="2002" name="Nature">
        <title>Comparison of the genomes of two Xanthomonas pathogens with differing host specificities.</title>
        <authorList>
            <person name="da Silva A.C.R."/>
            <person name="Ferro J.A."/>
            <person name="Reinach F.C."/>
            <person name="Farah C.S."/>
            <person name="Furlan L.R."/>
            <person name="Quaggio R.B."/>
            <person name="Monteiro-Vitorello C.B."/>
            <person name="Van Sluys M.A."/>
            <person name="Almeida N.F. Jr."/>
            <person name="Alves L.M.C."/>
            <person name="do Amaral A.M."/>
            <person name="Bertolini M.C."/>
            <person name="Camargo L.E.A."/>
            <person name="Camarotte G."/>
            <person name="Cannavan F."/>
            <person name="Cardozo J."/>
            <person name="Chambergo F."/>
            <person name="Ciapina L.P."/>
            <person name="Cicarelli R.M.B."/>
            <person name="Coutinho L.L."/>
            <person name="Cursino-Santos J.R."/>
            <person name="El-Dorry H."/>
            <person name="Faria J.B."/>
            <person name="Ferreira A.J.S."/>
            <person name="Ferreira R.C.C."/>
            <person name="Ferro M.I.T."/>
            <person name="Formighieri E.F."/>
            <person name="Franco M.C."/>
            <person name="Greggio C.C."/>
            <person name="Gruber A."/>
            <person name="Katsuyama A.M."/>
            <person name="Kishi L.T."/>
            <person name="Leite R.P."/>
            <person name="Lemos E.G.M."/>
            <person name="Lemos M.V.F."/>
            <person name="Locali E.C."/>
            <person name="Machado M.A."/>
            <person name="Madeira A.M.B.N."/>
            <person name="Martinez-Rossi N.M."/>
            <person name="Martins E.C."/>
            <person name="Meidanis J."/>
            <person name="Menck C.F.M."/>
            <person name="Miyaki C.Y."/>
            <person name="Moon D.H."/>
            <person name="Moreira L.M."/>
            <person name="Novo M.T.M."/>
            <person name="Okura V.K."/>
            <person name="Oliveira M.C."/>
            <person name="Oliveira V.R."/>
            <person name="Pereira H.A."/>
            <person name="Rossi A."/>
            <person name="Sena J.A.D."/>
            <person name="Silva C."/>
            <person name="de Souza R.F."/>
            <person name="Spinola L.A.F."/>
            <person name="Takita M.A."/>
            <person name="Tamura R.E."/>
            <person name="Teixeira E.C."/>
            <person name="Tezza R.I.D."/>
            <person name="Trindade dos Santos M."/>
            <person name="Truffi D."/>
            <person name="Tsai S.M."/>
            <person name="White F.F."/>
            <person name="Setubal J.C."/>
            <person name="Kitajima J.P."/>
        </authorList>
    </citation>
    <scope>NUCLEOTIDE SEQUENCE [LARGE SCALE GENOMIC DNA]</scope>
    <source>
        <strain>306</strain>
    </source>
</reference>
<feature type="chain" id="PRO_0000205492" description="Probable alpha-L-glutamate ligase">
    <location>
        <begin position="1"/>
        <end position="295"/>
    </location>
</feature>
<feature type="domain" description="ATP-grasp" evidence="1">
    <location>
        <begin position="104"/>
        <end position="287"/>
    </location>
</feature>
<feature type="binding site" evidence="1">
    <location>
        <position position="141"/>
    </location>
    <ligand>
        <name>ATP</name>
        <dbReference type="ChEBI" id="CHEBI:30616"/>
    </ligand>
</feature>
<feature type="binding site" evidence="1">
    <location>
        <begin position="178"/>
        <end position="179"/>
    </location>
    <ligand>
        <name>ATP</name>
        <dbReference type="ChEBI" id="CHEBI:30616"/>
    </ligand>
</feature>
<feature type="binding site" evidence="1">
    <location>
        <position position="187"/>
    </location>
    <ligand>
        <name>ATP</name>
        <dbReference type="ChEBI" id="CHEBI:30616"/>
    </ligand>
</feature>
<feature type="binding site" evidence="1">
    <location>
        <begin position="211"/>
        <end position="213"/>
    </location>
    <ligand>
        <name>ATP</name>
        <dbReference type="ChEBI" id="CHEBI:30616"/>
    </ligand>
</feature>
<feature type="binding site" evidence="1">
    <location>
        <position position="248"/>
    </location>
    <ligand>
        <name>Mg(2+)</name>
        <dbReference type="ChEBI" id="CHEBI:18420"/>
        <label>1</label>
    </ligand>
</feature>
<feature type="binding site" evidence="1">
    <location>
        <position position="248"/>
    </location>
    <ligand>
        <name>Mn(2+)</name>
        <dbReference type="ChEBI" id="CHEBI:29035"/>
        <label>1</label>
    </ligand>
</feature>
<feature type="binding site" evidence="1">
    <location>
        <position position="260"/>
    </location>
    <ligand>
        <name>Mg(2+)</name>
        <dbReference type="ChEBI" id="CHEBI:18420"/>
        <label>1</label>
    </ligand>
</feature>
<feature type="binding site" evidence="1">
    <location>
        <position position="260"/>
    </location>
    <ligand>
        <name>Mg(2+)</name>
        <dbReference type="ChEBI" id="CHEBI:18420"/>
        <label>2</label>
    </ligand>
</feature>
<feature type="binding site" evidence="1">
    <location>
        <position position="260"/>
    </location>
    <ligand>
        <name>Mn(2+)</name>
        <dbReference type="ChEBI" id="CHEBI:29035"/>
        <label>1</label>
    </ligand>
</feature>
<feature type="binding site" evidence="1">
    <location>
        <position position="260"/>
    </location>
    <ligand>
        <name>Mn(2+)</name>
        <dbReference type="ChEBI" id="CHEBI:29035"/>
        <label>2</label>
    </ligand>
</feature>
<feature type="binding site" evidence="1">
    <location>
        <position position="262"/>
    </location>
    <ligand>
        <name>Mg(2+)</name>
        <dbReference type="ChEBI" id="CHEBI:18420"/>
        <label>2</label>
    </ligand>
</feature>
<feature type="binding site" evidence="1">
    <location>
        <position position="262"/>
    </location>
    <ligand>
        <name>Mn(2+)</name>
        <dbReference type="ChEBI" id="CHEBI:29035"/>
        <label>2</label>
    </ligand>
</feature>
<accession>Q8PHK1</accession>
<accession>Q8PHK2</accession>
<sequence>MKIAILSRNSKLYSTRRLIEAGRKRGHTVRILDPLRCYMRIAADGFSLHYKGKPITGFDAVIPRIGASVTRYGTAVLRQLEFMGTYTPNPSDAILRSRDKLRAHQLLAAQGIDMPVTVFGDNPDDTQDLLSMLGPPPHVVKLNEGAQGAGVILTEKASASRGVVEALRGLYANFIVQEFIGEAEGADLRCFVVGDKVVAAMRRQAAEGDFRSNLHLGGTAAVAEATEQEQEVAVRSARALGLAVAGVDLIRSRRGPLVLEVNSTPGLEGVEGVCGVDVAAAIVVHLEQSVRRSAG</sequence>
<comment type="cofactor">
    <cofactor evidence="1">
        <name>Mg(2+)</name>
        <dbReference type="ChEBI" id="CHEBI:18420"/>
    </cofactor>
    <cofactor evidence="1">
        <name>Mn(2+)</name>
        <dbReference type="ChEBI" id="CHEBI:29035"/>
    </cofactor>
    <text evidence="1">Binds 2 magnesium or manganese ions per subunit.</text>
</comment>
<comment type="similarity">
    <text evidence="1">Belongs to the RimK family.</text>
</comment>
<comment type="sequence caution" evidence="2">
    <conflict type="frameshift">
        <sequence resource="EMBL-CDS" id="AAM38097"/>
    </conflict>
</comment>
<organism>
    <name type="scientific">Xanthomonas axonopodis pv. citri (strain 306)</name>
    <dbReference type="NCBI Taxonomy" id="190486"/>
    <lineage>
        <taxon>Bacteria</taxon>
        <taxon>Pseudomonadati</taxon>
        <taxon>Pseudomonadota</taxon>
        <taxon>Gammaproteobacteria</taxon>
        <taxon>Lysobacterales</taxon>
        <taxon>Lysobacteraceae</taxon>
        <taxon>Xanthomonas</taxon>
    </lineage>
</organism>
<keyword id="KW-0067">ATP-binding</keyword>
<keyword id="KW-0436">Ligase</keyword>
<keyword id="KW-0460">Magnesium</keyword>
<keyword id="KW-0464">Manganese</keyword>
<keyword id="KW-0479">Metal-binding</keyword>
<keyword id="KW-0547">Nucleotide-binding</keyword>
<keyword id="KW-0648">Protein biosynthesis</keyword>
<name>RIMK_XANAC</name>
<protein>
    <recommendedName>
        <fullName evidence="1">Probable alpha-L-glutamate ligase</fullName>
        <ecNumber evidence="1">6.3.2.-</ecNumber>
    </recommendedName>
</protein>